<name>PAND_BACAH</name>
<gene>
    <name evidence="1" type="primary">panD</name>
    <name type="ordered locus">BALH_1394</name>
</gene>
<accession>A0RBZ4</accession>
<proteinExistence type="inferred from homology"/>
<protein>
    <recommendedName>
        <fullName evidence="1">Aspartate 1-decarboxylase</fullName>
        <ecNumber evidence="1">4.1.1.11</ecNumber>
    </recommendedName>
    <alternativeName>
        <fullName evidence="1">Aspartate alpha-decarboxylase</fullName>
    </alternativeName>
    <component>
        <recommendedName>
            <fullName evidence="1">Aspartate 1-decarboxylase beta chain</fullName>
        </recommendedName>
    </component>
    <component>
        <recommendedName>
            <fullName evidence="1">Aspartate 1-decarboxylase alpha chain</fullName>
        </recommendedName>
    </component>
</protein>
<dbReference type="EC" id="4.1.1.11" evidence="1"/>
<dbReference type="EMBL" id="CP000485">
    <property type="protein sequence ID" value="ABK84737.1"/>
    <property type="molecule type" value="Genomic_DNA"/>
</dbReference>
<dbReference type="RefSeq" id="WP_000490176.1">
    <property type="nucleotide sequence ID" value="NC_008600.1"/>
</dbReference>
<dbReference type="SMR" id="A0RBZ4"/>
<dbReference type="GeneID" id="75084853"/>
<dbReference type="KEGG" id="btl:BALH_1394"/>
<dbReference type="HOGENOM" id="CLU_115305_2_0_9"/>
<dbReference type="UniPathway" id="UPA00028">
    <property type="reaction ID" value="UER00002"/>
</dbReference>
<dbReference type="GO" id="GO:0005829">
    <property type="term" value="C:cytosol"/>
    <property type="evidence" value="ECO:0007669"/>
    <property type="project" value="TreeGrafter"/>
</dbReference>
<dbReference type="GO" id="GO:0004068">
    <property type="term" value="F:aspartate 1-decarboxylase activity"/>
    <property type="evidence" value="ECO:0007669"/>
    <property type="project" value="UniProtKB-UniRule"/>
</dbReference>
<dbReference type="GO" id="GO:0006523">
    <property type="term" value="P:alanine biosynthetic process"/>
    <property type="evidence" value="ECO:0007669"/>
    <property type="project" value="InterPro"/>
</dbReference>
<dbReference type="GO" id="GO:0015940">
    <property type="term" value="P:pantothenate biosynthetic process"/>
    <property type="evidence" value="ECO:0007669"/>
    <property type="project" value="UniProtKB-UniRule"/>
</dbReference>
<dbReference type="CDD" id="cd06919">
    <property type="entry name" value="Asp_decarbox"/>
    <property type="match status" value="1"/>
</dbReference>
<dbReference type="Gene3D" id="2.40.40.20">
    <property type="match status" value="1"/>
</dbReference>
<dbReference type="HAMAP" id="MF_00446">
    <property type="entry name" value="PanD"/>
    <property type="match status" value="1"/>
</dbReference>
<dbReference type="InterPro" id="IPR009010">
    <property type="entry name" value="Asp_de-COase-like_dom_sf"/>
</dbReference>
<dbReference type="InterPro" id="IPR003190">
    <property type="entry name" value="Asp_decarbox"/>
</dbReference>
<dbReference type="NCBIfam" id="TIGR00223">
    <property type="entry name" value="panD"/>
    <property type="match status" value="1"/>
</dbReference>
<dbReference type="PANTHER" id="PTHR21012">
    <property type="entry name" value="ASPARTATE 1-DECARBOXYLASE"/>
    <property type="match status" value="1"/>
</dbReference>
<dbReference type="PANTHER" id="PTHR21012:SF0">
    <property type="entry name" value="ASPARTATE 1-DECARBOXYLASE"/>
    <property type="match status" value="1"/>
</dbReference>
<dbReference type="Pfam" id="PF02261">
    <property type="entry name" value="Asp_decarbox"/>
    <property type="match status" value="1"/>
</dbReference>
<dbReference type="PIRSF" id="PIRSF006246">
    <property type="entry name" value="Asp_decarbox"/>
    <property type="match status" value="1"/>
</dbReference>
<dbReference type="SUPFAM" id="SSF50692">
    <property type="entry name" value="ADC-like"/>
    <property type="match status" value="1"/>
</dbReference>
<organism>
    <name type="scientific">Bacillus thuringiensis (strain Al Hakam)</name>
    <dbReference type="NCBI Taxonomy" id="412694"/>
    <lineage>
        <taxon>Bacteria</taxon>
        <taxon>Bacillati</taxon>
        <taxon>Bacillota</taxon>
        <taxon>Bacilli</taxon>
        <taxon>Bacillales</taxon>
        <taxon>Bacillaceae</taxon>
        <taxon>Bacillus</taxon>
        <taxon>Bacillus cereus group</taxon>
    </lineage>
</organism>
<comment type="function">
    <text evidence="1">Catalyzes the pyruvoyl-dependent decarboxylation of aspartate to produce beta-alanine.</text>
</comment>
<comment type="catalytic activity">
    <reaction evidence="1">
        <text>L-aspartate + H(+) = beta-alanine + CO2</text>
        <dbReference type="Rhea" id="RHEA:19497"/>
        <dbReference type="ChEBI" id="CHEBI:15378"/>
        <dbReference type="ChEBI" id="CHEBI:16526"/>
        <dbReference type="ChEBI" id="CHEBI:29991"/>
        <dbReference type="ChEBI" id="CHEBI:57966"/>
        <dbReference type="EC" id="4.1.1.11"/>
    </reaction>
</comment>
<comment type="cofactor">
    <cofactor evidence="1">
        <name>pyruvate</name>
        <dbReference type="ChEBI" id="CHEBI:15361"/>
    </cofactor>
    <text evidence="1">Binds 1 pyruvoyl group covalently per subunit.</text>
</comment>
<comment type="pathway">
    <text evidence="1">Cofactor biosynthesis; (R)-pantothenate biosynthesis; beta-alanine from L-aspartate: step 1/1.</text>
</comment>
<comment type="subunit">
    <text evidence="1">Heterooctamer of four alpha and four beta subunits.</text>
</comment>
<comment type="subcellular location">
    <subcellularLocation>
        <location evidence="1">Cytoplasm</location>
    </subcellularLocation>
</comment>
<comment type="PTM">
    <text evidence="1">Is synthesized initially as an inactive proenzyme, which is activated by self-cleavage at a specific serine bond to produce a beta-subunit with a hydroxyl group at its C-terminus and an alpha-subunit with a pyruvoyl group at its N-terminus.</text>
</comment>
<comment type="similarity">
    <text evidence="1">Belongs to the PanD family.</text>
</comment>
<sequence length="127" mass="13909">MFRTMMRAKLHRATVTEANLNYVGSITIDEDLMDAVNIVENEKVQIVNNNNGARLETYVIKGERGSGVVCLNGAAARLVQPGDKVIIICYGLVAEENIHKQEPKIAVLDDDNQIIEMLGAEKAGTIL</sequence>
<keyword id="KW-0068">Autocatalytic cleavage</keyword>
<keyword id="KW-0963">Cytoplasm</keyword>
<keyword id="KW-0210">Decarboxylase</keyword>
<keyword id="KW-0456">Lyase</keyword>
<keyword id="KW-0566">Pantothenate biosynthesis</keyword>
<keyword id="KW-0670">Pyruvate</keyword>
<keyword id="KW-0704">Schiff base</keyword>
<keyword id="KW-0865">Zymogen</keyword>
<reference key="1">
    <citation type="journal article" date="2007" name="J. Bacteriol.">
        <title>The complete genome sequence of Bacillus thuringiensis Al Hakam.</title>
        <authorList>
            <person name="Challacombe J.F."/>
            <person name="Altherr M.R."/>
            <person name="Xie G."/>
            <person name="Bhotika S.S."/>
            <person name="Brown N."/>
            <person name="Bruce D."/>
            <person name="Campbell C.S."/>
            <person name="Campbell M.L."/>
            <person name="Chen J."/>
            <person name="Chertkov O."/>
            <person name="Cleland C."/>
            <person name="Dimitrijevic M."/>
            <person name="Doggett N.A."/>
            <person name="Fawcett J.J."/>
            <person name="Glavina T."/>
            <person name="Goodwin L.A."/>
            <person name="Green L.D."/>
            <person name="Han C.S."/>
            <person name="Hill K.K."/>
            <person name="Hitchcock P."/>
            <person name="Jackson P.J."/>
            <person name="Keim P."/>
            <person name="Kewalramani A.R."/>
            <person name="Longmire J."/>
            <person name="Lucas S."/>
            <person name="Malfatti S."/>
            <person name="Martinez D."/>
            <person name="McMurry K."/>
            <person name="Meincke L.J."/>
            <person name="Misra M."/>
            <person name="Moseman B.L."/>
            <person name="Mundt M."/>
            <person name="Munk A.C."/>
            <person name="Okinaka R.T."/>
            <person name="Parson-Quintana B."/>
            <person name="Reilly L.P."/>
            <person name="Richardson P."/>
            <person name="Robinson D.L."/>
            <person name="Saunders E."/>
            <person name="Tapia R."/>
            <person name="Tesmer J.G."/>
            <person name="Thayer N."/>
            <person name="Thompson L.S."/>
            <person name="Tice H."/>
            <person name="Ticknor L.O."/>
            <person name="Wills P.L."/>
            <person name="Gilna P."/>
            <person name="Brettin T.S."/>
        </authorList>
    </citation>
    <scope>NUCLEOTIDE SEQUENCE [LARGE SCALE GENOMIC DNA]</scope>
    <source>
        <strain>Al Hakam</strain>
    </source>
</reference>
<feature type="chain" id="PRO_0000306931" description="Aspartate 1-decarboxylase beta chain" evidence="1">
    <location>
        <begin position="1"/>
        <end position="24"/>
    </location>
</feature>
<feature type="chain" id="PRO_0000306932" description="Aspartate 1-decarboxylase alpha chain" evidence="1">
    <location>
        <begin position="25"/>
        <end position="127"/>
    </location>
</feature>
<feature type="active site" description="Schiff-base intermediate with substrate; via pyruvic acid" evidence="1">
    <location>
        <position position="25"/>
    </location>
</feature>
<feature type="active site" description="Proton donor" evidence="1">
    <location>
        <position position="58"/>
    </location>
</feature>
<feature type="binding site" evidence="1">
    <location>
        <position position="57"/>
    </location>
    <ligand>
        <name>substrate</name>
    </ligand>
</feature>
<feature type="binding site" evidence="1">
    <location>
        <begin position="73"/>
        <end position="75"/>
    </location>
    <ligand>
        <name>substrate</name>
    </ligand>
</feature>
<feature type="modified residue" description="Pyruvic acid (Ser)" evidence="1">
    <location>
        <position position="25"/>
    </location>
</feature>
<evidence type="ECO:0000255" key="1">
    <source>
        <dbReference type="HAMAP-Rule" id="MF_00446"/>
    </source>
</evidence>